<reference key="1">
    <citation type="journal article" date="1999" name="Science">
        <title>Genome sequence of the radioresistant bacterium Deinococcus radiodurans R1.</title>
        <authorList>
            <person name="White O."/>
            <person name="Eisen J.A."/>
            <person name="Heidelberg J.F."/>
            <person name="Hickey E.K."/>
            <person name="Peterson J.D."/>
            <person name="Dodson R.J."/>
            <person name="Haft D.H."/>
            <person name="Gwinn M.L."/>
            <person name="Nelson W.C."/>
            <person name="Richardson D.L."/>
            <person name="Moffat K.S."/>
            <person name="Qin H."/>
            <person name="Jiang L."/>
            <person name="Pamphile W."/>
            <person name="Crosby M."/>
            <person name="Shen M."/>
            <person name="Vamathevan J.J."/>
            <person name="Lam P."/>
            <person name="McDonald L.A."/>
            <person name="Utterback T.R."/>
            <person name="Zalewski C."/>
            <person name="Makarova K.S."/>
            <person name="Aravind L."/>
            <person name="Daly M.J."/>
            <person name="Minton K.W."/>
            <person name="Fleischmann R.D."/>
            <person name="Ketchum K.A."/>
            <person name="Nelson K.E."/>
            <person name="Salzberg S.L."/>
            <person name="Smith H.O."/>
            <person name="Venter J.C."/>
            <person name="Fraser C.M."/>
        </authorList>
    </citation>
    <scope>NUCLEOTIDE SEQUENCE [LARGE SCALE GENOMIC DNA]</scope>
    <source>
        <strain>ATCC 13939 / DSM 20539 / JCM 16871 / CCUG 27074 / LMG 4051 / NBRC 15346 / NCIMB 9279 / VKM B-1422 / R1</strain>
    </source>
</reference>
<keyword id="KW-0030">Aminoacyl-tRNA synthetase</keyword>
<keyword id="KW-0067">ATP-binding</keyword>
<keyword id="KW-0963">Cytoplasm</keyword>
<keyword id="KW-0436">Ligase</keyword>
<keyword id="KW-0547">Nucleotide-binding</keyword>
<keyword id="KW-0648">Protein biosynthesis</keyword>
<keyword id="KW-1185">Reference proteome</keyword>
<name>SYS_DEIRA</name>
<sequence>MLDLKFIRENPDAVREAIRVKNVALDLDDLLQRDRDLVALKQRVEAMQTERNANAKLVPKASPEDRPGLIQKGKDLSEDLKALEPQLREQEDALKQLLLRVPNIPLPGVPVGKDEDDNVELRREGELPGFDFTPLDQVEILEKQGWADFERVARVSGSRSYLLKGDAALLEMAVLMFALDFLSQRGFTPLSTTALVRRETLVNSGHFPGDEESVYKLEGDELLLAGTAEVPINSLYAGEQLSADELPLTFAGFSAAFRREAGSAGRDVRGLIRVHEFRKVEQYVLCRADQEEGLKWFERLLSNAEGLLQALELPYRVIQNCTGDMGAGKVLMYDIETWVPSEQKYRETHSCSYLGDWQARRTGLRYRDEHGKLLYAHTLNNTGIASPRILVPLLENHQQADGTVRVPAALRPYLGGREVLGQPVR</sequence>
<protein>
    <recommendedName>
        <fullName evidence="1">Serine--tRNA ligase</fullName>
        <ecNumber evidence="1">6.1.1.11</ecNumber>
    </recommendedName>
    <alternativeName>
        <fullName evidence="1">Seryl-tRNA synthetase</fullName>
        <shortName evidence="1">SerRS</shortName>
    </alternativeName>
    <alternativeName>
        <fullName evidence="1">Seryl-tRNA(Ser/Sec) synthetase</fullName>
    </alternativeName>
</protein>
<accession>Q9RUV5</accession>
<comment type="function">
    <text evidence="1">Catalyzes the attachment of serine to tRNA(Ser). Is also able to aminoacylate tRNA(Sec) with serine, to form the misacylated tRNA L-seryl-tRNA(Sec), which will be further converted into selenocysteinyl-tRNA(Sec).</text>
</comment>
<comment type="catalytic activity">
    <reaction evidence="1">
        <text>tRNA(Ser) + L-serine + ATP = L-seryl-tRNA(Ser) + AMP + diphosphate + H(+)</text>
        <dbReference type="Rhea" id="RHEA:12292"/>
        <dbReference type="Rhea" id="RHEA-COMP:9669"/>
        <dbReference type="Rhea" id="RHEA-COMP:9703"/>
        <dbReference type="ChEBI" id="CHEBI:15378"/>
        <dbReference type="ChEBI" id="CHEBI:30616"/>
        <dbReference type="ChEBI" id="CHEBI:33019"/>
        <dbReference type="ChEBI" id="CHEBI:33384"/>
        <dbReference type="ChEBI" id="CHEBI:78442"/>
        <dbReference type="ChEBI" id="CHEBI:78533"/>
        <dbReference type="ChEBI" id="CHEBI:456215"/>
        <dbReference type="EC" id="6.1.1.11"/>
    </reaction>
</comment>
<comment type="catalytic activity">
    <reaction evidence="1">
        <text>tRNA(Sec) + L-serine + ATP = L-seryl-tRNA(Sec) + AMP + diphosphate + H(+)</text>
        <dbReference type="Rhea" id="RHEA:42580"/>
        <dbReference type="Rhea" id="RHEA-COMP:9742"/>
        <dbReference type="Rhea" id="RHEA-COMP:10128"/>
        <dbReference type="ChEBI" id="CHEBI:15378"/>
        <dbReference type="ChEBI" id="CHEBI:30616"/>
        <dbReference type="ChEBI" id="CHEBI:33019"/>
        <dbReference type="ChEBI" id="CHEBI:33384"/>
        <dbReference type="ChEBI" id="CHEBI:78442"/>
        <dbReference type="ChEBI" id="CHEBI:78533"/>
        <dbReference type="ChEBI" id="CHEBI:456215"/>
        <dbReference type="EC" id="6.1.1.11"/>
    </reaction>
</comment>
<comment type="pathway">
    <text evidence="1">Aminoacyl-tRNA biosynthesis; selenocysteinyl-tRNA(Sec) biosynthesis; L-seryl-tRNA(Sec) from L-serine and tRNA(Sec): step 1/1.</text>
</comment>
<comment type="subunit">
    <text evidence="1">Homodimer. The tRNA molecule binds across the dimer.</text>
</comment>
<comment type="subcellular location">
    <subcellularLocation>
        <location evidence="1">Cytoplasm</location>
    </subcellularLocation>
</comment>
<comment type="domain">
    <text evidence="1">Consists of two distinct domains, a catalytic core and a N-terminal extension that is involved in tRNA binding.</text>
</comment>
<comment type="similarity">
    <text evidence="1">Belongs to the class-II aminoacyl-tRNA synthetase family. Type-1 seryl-tRNA synthetase subfamily.</text>
</comment>
<gene>
    <name evidence="1" type="primary">serS</name>
    <name type="ordered locus">DR_1276</name>
</gene>
<organism>
    <name type="scientific">Deinococcus radiodurans (strain ATCC 13939 / DSM 20539 / JCM 16871 / CCUG 27074 / LMG 4051 / NBRC 15346 / NCIMB 9279 / VKM B-1422 / R1)</name>
    <dbReference type="NCBI Taxonomy" id="243230"/>
    <lineage>
        <taxon>Bacteria</taxon>
        <taxon>Thermotogati</taxon>
        <taxon>Deinococcota</taxon>
        <taxon>Deinococci</taxon>
        <taxon>Deinococcales</taxon>
        <taxon>Deinococcaceae</taxon>
        <taxon>Deinococcus</taxon>
    </lineage>
</organism>
<dbReference type="EC" id="6.1.1.11" evidence="1"/>
<dbReference type="EMBL" id="AE000513">
    <property type="protein sequence ID" value="AAF10848.1"/>
    <property type="molecule type" value="Genomic_DNA"/>
</dbReference>
<dbReference type="PIR" id="G75414">
    <property type="entry name" value="G75414"/>
</dbReference>
<dbReference type="RefSeq" id="NP_295000.1">
    <property type="nucleotide sequence ID" value="NC_001263.1"/>
</dbReference>
<dbReference type="RefSeq" id="WP_010887919.1">
    <property type="nucleotide sequence ID" value="NC_001263.1"/>
</dbReference>
<dbReference type="SMR" id="Q9RUV5"/>
<dbReference type="FunCoup" id="Q9RUV5">
    <property type="interactions" value="472"/>
</dbReference>
<dbReference type="STRING" id="243230.DR_1276"/>
<dbReference type="PaxDb" id="243230-DR_1276"/>
<dbReference type="EnsemblBacteria" id="AAF10848">
    <property type="protein sequence ID" value="AAF10848"/>
    <property type="gene ID" value="DR_1276"/>
</dbReference>
<dbReference type="GeneID" id="69517524"/>
<dbReference type="KEGG" id="dra:DR_1276"/>
<dbReference type="PATRIC" id="fig|243230.17.peg.1472"/>
<dbReference type="eggNOG" id="COG0172">
    <property type="taxonomic scope" value="Bacteria"/>
</dbReference>
<dbReference type="HOGENOM" id="CLU_023797_0_1_0"/>
<dbReference type="InParanoid" id="Q9RUV5"/>
<dbReference type="OrthoDB" id="9804647at2"/>
<dbReference type="UniPathway" id="UPA00906">
    <property type="reaction ID" value="UER00895"/>
</dbReference>
<dbReference type="Proteomes" id="UP000002524">
    <property type="component" value="Chromosome 1"/>
</dbReference>
<dbReference type="GO" id="GO:0005737">
    <property type="term" value="C:cytoplasm"/>
    <property type="evidence" value="ECO:0007669"/>
    <property type="project" value="UniProtKB-SubCell"/>
</dbReference>
<dbReference type="GO" id="GO:0005524">
    <property type="term" value="F:ATP binding"/>
    <property type="evidence" value="ECO:0007669"/>
    <property type="project" value="UniProtKB-UniRule"/>
</dbReference>
<dbReference type="GO" id="GO:0004828">
    <property type="term" value="F:serine-tRNA ligase activity"/>
    <property type="evidence" value="ECO:0007669"/>
    <property type="project" value="UniProtKB-UniRule"/>
</dbReference>
<dbReference type="GO" id="GO:0016260">
    <property type="term" value="P:selenocysteine biosynthetic process"/>
    <property type="evidence" value="ECO:0007669"/>
    <property type="project" value="UniProtKB-UniRule"/>
</dbReference>
<dbReference type="GO" id="GO:0006434">
    <property type="term" value="P:seryl-tRNA aminoacylation"/>
    <property type="evidence" value="ECO:0007669"/>
    <property type="project" value="UniProtKB-UniRule"/>
</dbReference>
<dbReference type="CDD" id="cd00770">
    <property type="entry name" value="SerRS_core"/>
    <property type="match status" value="1"/>
</dbReference>
<dbReference type="Gene3D" id="3.30.930.10">
    <property type="entry name" value="Bira Bifunctional Protein, Domain 2"/>
    <property type="match status" value="1"/>
</dbReference>
<dbReference type="Gene3D" id="1.10.287.40">
    <property type="entry name" value="Serine-tRNA synthetase, tRNA binding domain"/>
    <property type="match status" value="2"/>
</dbReference>
<dbReference type="HAMAP" id="MF_00176">
    <property type="entry name" value="Ser_tRNA_synth_type1"/>
    <property type="match status" value="1"/>
</dbReference>
<dbReference type="InterPro" id="IPR002314">
    <property type="entry name" value="aa-tRNA-synt_IIb"/>
</dbReference>
<dbReference type="InterPro" id="IPR006195">
    <property type="entry name" value="aa-tRNA-synth_II"/>
</dbReference>
<dbReference type="InterPro" id="IPR045864">
    <property type="entry name" value="aa-tRNA-synth_II/BPL/LPL"/>
</dbReference>
<dbReference type="InterPro" id="IPR002317">
    <property type="entry name" value="Ser-tRNA-ligase_type_1"/>
</dbReference>
<dbReference type="InterPro" id="IPR015866">
    <property type="entry name" value="Ser-tRNA-synth_1_N"/>
</dbReference>
<dbReference type="InterPro" id="IPR042103">
    <property type="entry name" value="SerRS_1_N_sf"/>
</dbReference>
<dbReference type="InterPro" id="IPR033729">
    <property type="entry name" value="SerRS_core"/>
</dbReference>
<dbReference type="InterPro" id="IPR010978">
    <property type="entry name" value="tRNA-bd_arm"/>
</dbReference>
<dbReference type="NCBIfam" id="TIGR00414">
    <property type="entry name" value="serS"/>
    <property type="match status" value="1"/>
</dbReference>
<dbReference type="PANTHER" id="PTHR43697:SF1">
    <property type="entry name" value="SERINE--TRNA LIGASE"/>
    <property type="match status" value="1"/>
</dbReference>
<dbReference type="PANTHER" id="PTHR43697">
    <property type="entry name" value="SERYL-TRNA SYNTHETASE"/>
    <property type="match status" value="1"/>
</dbReference>
<dbReference type="Pfam" id="PF02403">
    <property type="entry name" value="Seryl_tRNA_N"/>
    <property type="match status" value="1"/>
</dbReference>
<dbReference type="Pfam" id="PF00587">
    <property type="entry name" value="tRNA-synt_2b"/>
    <property type="match status" value="1"/>
</dbReference>
<dbReference type="PIRSF" id="PIRSF001529">
    <property type="entry name" value="Ser-tRNA-synth_IIa"/>
    <property type="match status" value="1"/>
</dbReference>
<dbReference type="PRINTS" id="PR00981">
    <property type="entry name" value="TRNASYNTHSER"/>
</dbReference>
<dbReference type="SUPFAM" id="SSF55681">
    <property type="entry name" value="Class II aaRS and biotin synthetases"/>
    <property type="match status" value="1"/>
</dbReference>
<dbReference type="SUPFAM" id="SSF46589">
    <property type="entry name" value="tRNA-binding arm"/>
    <property type="match status" value="1"/>
</dbReference>
<dbReference type="PROSITE" id="PS50862">
    <property type="entry name" value="AA_TRNA_LIGASE_II"/>
    <property type="match status" value="1"/>
</dbReference>
<evidence type="ECO:0000255" key="1">
    <source>
        <dbReference type="HAMAP-Rule" id="MF_00176"/>
    </source>
</evidence>
<feature type="chain" id="PRO_0000122041" description="Serine--tRNA ligase">
    <location>
        <begin position="1"/>
        <end position="425"/>
    </location>
</feature>
<feature type="binding site" evidence="1">
    <location>
        <begin position="227"/>
        <end position="229"/>
    </location>
    <ligand>
        <name>L-serine</name>
        <dbReference type="ChEBI" id="CHEBI:33384"/>
    </ligand>
</feature>
<feature type="binding site" evidence="1">
    <location>
        <begin position="258"/>
        <end position="260"/>
    </location>
    <ligand>
        <name>ATP</name>
        <dbReference type="ChEBI" id="CHEBI:30616"/>
    </ligand>
</feature>
<feature type="binding site" evidence="1">
    <location>
        <position position="274"/>
    </location>
    <ligand>
        <name>ATP</name>
        <dbReference type="ChEBI" id="CHEBI:30616"/>
    </ligand>
</feature>
<feature type="binding site" evidence="1">
    <location>
        <position position="281"/>
    </location>
    <ligand>
        <name>L-serine</name>
        <dbReference type="ChEBI" id="CHEBI:33384"/>
    </ligand>
</feature>
<feature type="binding site" evidence="1">
    <location>
        <begin position="347"/>
        <end position="350"/>
    </location>
    <ligand>
        <name>ATP</name>
        <dbReference type="ChEBI" id="CHEBI:30616"/>
    </ligand>
</feature>
<feature type="binding site" evidence="1">
    <location>
        <position position="382"/>
    </location>
    <ligand>
        <name>L-serine</name>
        <dbReference type="ChEBI" id="CHEBI:33384"/>
    </ligand>
</feature>
<proteinExistence type="inferred from homology"/>